<reference key="1">
    <citation type="journal article" date="2009" name="J. Bacteriol.">
        <title>Complete genome sequence and comparative genome analysis of enteropathogenic Escherichia coli O127:H6 strain E2348/69.</title>
        <authorList>
            <person name="Iguchi A."/>
            <person name="Thomson N.R."/>
            <person name="Ogura Y."/>
            <person name="Saunders D."/>
            <person name="Ooka T."/>
            <person name="Henderson I.R."/>
            <person name="Harris D."/>
            <person name="Asadulghani M."/>
            <person name="Kurokawa K."/>
            <person name="Dean P."/>
            <person name="Kenny B."/>
            <person name="Quail M.A."/>
            <person name="Thurston S."/>
            <person name="Dougan G."/>
            <person name="Hayashi T."/>
            <person name="Parkhill J."/>
            <person name="Frankel G."/>
        </authorList>
    </citation>
    <scope>NUCLEOTIDE SEQUENCE [LARGE SCALE GENOMIC DNA]</scope>
    <source>
        <strain>E2348/69 / EPEC</strain>
    </source>
</reference>
<dbReference type="EMBL" id="FM180568">
    <property type="protein sequence ID" value="CAS09344.1"/>
    <property type="molecule type" value="Genomic_DNA"/>
</dbReference>
<dbReference type="RefSeq" id="WP_000956501.1">
    <property type="nucleotide sequence ID" value="NC_011601.1"/>
</dbReference>
<dbReference type="SMR" id="B7US50"/>
<dbReference type="KEGG" id="ecg:E2348C_1796"/>
<dbReference type="HOGENOM" id="CLU_013016_0_3_6"/>
<dbReference type="Proteomes" id="UP000008205">
    <property type="component" value="Chromosome"/>
</dbReference>
<dbReference type="GO" id="GO:0005886">
    <property type="term" value="C:plasma membrane"/>
    <property type="evidence" value="ECO:0007669"/>
    <property type="project" value="UniProtKB-SubCell"/>
</dbReference>
<dbReference type="GO" id="GO:0090482">
    <property type="term" value="F:vitamin transmembrane transporter activity"/>
    <property type="evidence" value="ECO:0007669"/>
    <property type="project" value="UniProtKB-UniRule"/>
</dbReference>
<dbReference type="GO" id="GO:0015889">
    <property type="term" value="P:cobalamin transport"/>
    <property type="evidence" value="ECO:0007669"/>
    <property type="project" value="UniProtKB-UniRule"/>
</dbReference>
<dbReference type="CDD" id="cd06550">
    <property type="entry name" value="TM_ABC_iron-siderophores_like"/>
    <property type="match status" value="1"/>
</dbReference>
<dbReference type="FunFam" id="1.10.3470.10:FF:000001">
    <property type="entry name" value="Vitamin B12 ABC transporter permease BtuC"/>
    <property type="match status" value="1"/>
</dbReference>
<dbReference type="Gene3D" id="1.10.3470.10">
    <property type="entry name" value="ABC transporter involved in vitamin B12 uptake, BtuC"/>
    <property type="match status" value="1"/>
</dbReference>
<dbReference type="HAMAP" id="MF_01004">
    <property type="entry name" value="BtuC"/>
    <property type="match status" value="1"/>
</dbReference>
<dbReference type="InterPro" id="IPR037294">
    <property type="entry name" value="ABC_BtuC-like"/>
</dbReference>
<dbReference type="InterPro" id="IPR023691">
    <property type="entry name" value="ABC_transptr_BtuC"/>
</dbReference>
<dbReference type="InterPro" id="IPR000522">
    <property type="entry name" value="ABC_transptr_permease_BtuC"/>
</dbReference>
<dbReference type="NCBIfam" id="NF003001">
    <property type="entry name" value="PRK03784.1"/>
    <property type="match status" value="1"/>
</dbReference>
<dbReference type="PANTHER" id="PTHR30472">
    <property type="entry name" value="FERRIC ENTEROBACTIN TRANSPORT SYSTEM PERMEASE PROTEIN"/>
    <property type="match status" value="1"/>
</dbReference>
<dbReference type="PANTHER" id="PTHR30472:SF29">
    <property type="entry name" value="VITAMIN B12 IMPORT SYSTEM PERMEASE PROTEIN BTUC"/>
    <property type="match status" value="1"/>
</dbReference>
<dbReference type="Pfam" id="PF01032">
    <property type="entry name" value="FecCD"/>
    <property type="match status" value="1"/>
</dbReference>
<dbReference type="SUPFAM" id="SSF81345">
    <property type="entry name" value="ABC transporter involved in vitamin B12 uptake, BtuC"/>
    <property type="match status" value="1"/>
</dbReference>
<evidence type="ECO:0000255" key="1">
    <source>
        <dbReference type="HAMAP-Rule" id="MF_01004"/>
    </source>
</evidence>
<protein>
    <recommendedName>
        <fullName evidence="1">Vitamin B12 import system permease protein BtuC</fullName>
    </recommendedName>
</protein>
<name>BTUC_ECO27</name>
<proteinExistence type="inferred from homology"/>
<organism>
    <name type="scientific">Escherichia coli O127:H6 (strain E2348/69 / EPEC)</name>
    <dbReference type="NCBI Taxonomy" id="574521"/>
    <lineage>
        <taxon>Bacteria</taxon>
        <taxon>Pseudomonadati</taxon>
        <taxon>Pseudomonadota</taxon>
        <taxon>Gammaproteobacteria</taxon>
        <taxon>Enterobacterales</taxon>
        <taxon>Enterobacteriaceae</taxon>
        <taxon>Escherichia</taxon>
    </lineage>
</organism>
<feature type="chain" id="PRO_1000148790" description="Vitamin B12 import system permease protein BtuC">
    <location>
        <begin position="1"/>
        <end position="326"/>
    </location>
</feature>
<feature type="transmembrane region" description="Helical" evidence="1">
    <location>
        <begin position="19"/>
        <end position="39"/>
    </location>
</feature>
<feature type="transmembrane region" description="Helical" evidence="1">
    <location>
        <begin position="61"/>
        <end position="81"/>
    </location>
</feature>
<feature type="transmembrane region" description="Helical" evidence="1">
    <location>
        <begin position="88"/>
        <end position="108"/>
    </location>
</feature>
<feature type="transmembrane region" description="Helical" evidence="1">
    <location>
        <begin position="112"/>
        <end position="132"/>
    </location>
</feature>
<feature type="transmembrane region" description="Helical" evidence="1">
    <location>
        <begin position="146"/>
        <end position="166"/>
    </location>
</feature>
<feature type="transmembrane region" description="Helical" evidence="1">
    <location>
        <begin position="184"/>
        <end position="204"/>
    </location>
</feature>
<feature type="transmembrane region" description="Helical" evidence="1">
    <location>
        <begin position="240"/>
        <end position="260"/>
    </location>
</feature>
<feature type="transmembrane region" description="Helical" evidence="1">
    <location>
        <begin position="274"/>
        <end position="294"/>
    </location>
</feature>
<feature type="transmembrane region" description="Helical" evidence="1">
    <location>
        <begin position="302"/>
        <end position="322"/>
    </location>
</feature>
<sequence>MLTLARQQQRQNIRWLLCLSVLMLLALLLSLCAGELWILPGDWFSPRGELFVWQIRLPRTLAVLLVGAALAISGAVMQALFENPLAEPGLLGVSNGAGVGLIAAVLLGQGQLPNWALGLCAIAGALIITLILLRFARRHLSTSRLLLAGVALGIICSALMTWAIYFSTSVDLRQLMYWMMGGFGGVDWRQSWLMLALIPVLLWICCQSRPMNILALGEISARQLGLPLWFWRNVLVAATGWMVGVSVALAGAIGFIGLVIPHILRLCGLTDHRVLLPGCALAGASALLLADIVARLALAAAELPIGVVTATLGAPVFIWLLLKAGR</sequence>
<keyword id="KW-0997">Cell inner membrane</keyword>
<keyword id="KW-1003">Cell membrane</keyword>
<keyword id="KW-0472">Membrane</keyword>
<keyword id="KW-1185">Reference proteome</keyword>
<keyword id="KW-0812">Transmembrane</keyword>
<keyword id="KW-1133">Transmembrane helix</keyword>
<keyword id="KW-0813">Transport</keyword>
<comment type="function">
    <text evidence="1">Part of the ABC transporter complex BtuCDF involved in vitamin B12 import. Involved in the translocation of the substrate across the membrane.</text>
</comment>
<comment type="subunit">
    <text evidence="1">The complex is composed of two ATP-binding proteins (BtuD), two transmembrane proteins (BtuC) and a solute-binding protein (BtuF).</text>
</comment>
<comment type="subcellular location">
    <subcellularLocation>
        <location evidence="1">Cell inner membrane</location>
        <topology evidence="1">Multi-pass membrane protein</topology>
    </subcellularLocation>
</comment>
<comment type="similarity">
    <text evidence="1">Belongs to the binding-protein-dependent transport system permease family. FecCD subfamily.</text>
</comment>
<gene>
    <name evidence="1" type="primary">btuC</name>
    <name type="ordered locus">E2348C_1796</name>
</gene>
<accession>B7US50</accession>